<gene>
    <name type="primary">itga5</name>
</gene>
<sequence length="1050" mass="115962">MQLPRGSRVPGLVATFLFPVLCALLTFSSVRGFNLAVEQPAVYTGASGSFFGFSVDFYLPDAQSISILVGAPKANTSQPGVFEGGAVFYCPWQRNGTNCTEISFDSHGDRQRELFDTPQPKHMESKSEQWFGATVRAHGKTILACAPRYSWRTEKEEKRSDPVGTCYLSVNNFTTFVEYSPCRTDFSDAAGQGYCQGGFSAEFTKSGRVLLGGPGSYFWQGQVITATQDEIQEAYYPEYFVLEYKKQMQTRQAASSYDDSYFGYSVAVGEFSEDATEDFVVGVPKGNITYGYVTILNGTDLRSLYNFSGEQMASYFGYSVSATDLNSDGLDDLLIGAPLFMDRTHDGRVQEVGRVYVYLQGDHMESTPHLILTGMEEYGRFGSSIASLGDLDQDGFNDIAIGAPFGGEAQRGAVFIFNGQPGGVDSKPSQVLQGQWGSSQQPSFFGLSTRGGHDLDGNGYPDLIVGAFGVDTTLVYRGRPIIHASASLSISPNMFNPEEKTCTLEGNASAVSCINLSFCLNASGKHVPNSIGIKVELQLDQTKQKGAVKRALFLKTRQPQLTQTIHLLNGGKEECRAMKIYLREESEFRDKLSPIYVGLNFSLDPLAPADAHGLMPIFNYKTKNYIEQKAQIQLDCGEDNICVPDLKLNVSGDRKSVYLGDENFLTLFFNAQNLGGGAYEAELYVTLPPEAEYSGIVRNNEHLLILPCAYEMENQTRLVICDLGNPMKAGASLAGGLRFTVPHLRDSSHKVQFDFQIRSKNQNNSQSETVHLALNVEAHSTVSFFGASKPDSVIFPVANWKPGRNPVTGQEAGPEVKHVYELVNFGPSSISQGILELRCPMRVNKEYAMYVMSYAVQGLTNCTSNHPANALHLQHSPTDHPPTLNPKTVHHVERRDTARLISGSSNVLKCNEPHVDCFHLHCDVGPLEKQKRAILRVNFLVWANTFMQKENQGFTLQCDALYHIQKLPYKILPHVYPKGTHQVDTAIHWAKPESSYGVPLWIIILAILIGLLLLALLIYVLYKLGFFKRSYQYGTAMEKAELKPQAASEA</sequence>
<comment type="function">
    <text evidence="1">Integrin alpha-5/beta-1 (ITGA5:ITGB1) is a receptor for fibronectin. It recognizes the sequence R-G-D in its ligands. ITGA5:ITGB1 acts as a receptor for fibrillin-1 (FBN1) and mediates R-G-D-dependent cell adhesion to FBN1. ITGA5:ITGB1 acts as a receptor for fibronectin (FN1) and mediates R-G-D-dependent cell adhesion to FN1 (By similarity). ITGA5:ITGB1 is a receptor for IL1B and binding is essential for IL1B signaling. ITGA5:ITGB3 is a receptor for soluble CD40LG and is required for CD40/CD40LG signaling (By similarity).</text>
</comment>
<comment type="subunit">
    <text>Heterodimer of an alpha and a beta subunit. The alpha subunit is composed of a heavy and a light chain linked by a disulfide bond. Alpha-5 associates with beta-1.</text>
</comment>
<comment type="subcellular location">
    <subcellularLocation>
        <location evidence="1">Cell membrane</location>
        <topology evidence="2">Single-pass type I membrane protein</topology>
    </subcellularLocation>
    <subcellularLocation>
        <location evidence="1">Cell junction</location>
        <location evidence="1">Focal adhesion</location>
    </subcellularLocation>
</comment>
<comment type="similarity">
    <text evidence="4">Belongs to the integrin alpha chain family.</text>
</comment>
<reference key="1">
    <citation type="journal article" date="1995" name="Mech. Dev.">
        <title>Integrin alpha 5 during early development of Xenopus laevis.</title>
        <authorList>
            <person name="Joos T.O."/>
            <person name="Whittaker C.A."/>
            <person name="Meng F."/>
            <person name="Desimone D.W."/>
            <person name="Gnau V."/>
            <person name="Hausen P."/>
        </authorList>
    </citation>
    <scope>NUCLEOTIDE SEQUENCE [MRNA]</scope>
</reference>
<reference key="2">
    <citation type="journal article" date="1993" name="Development">
        <title>Integrin alpha subunit mRNAs are differentially expressed in early Xenopus embryos.</title>
        <authorList>
            <person name="Whittaker C.A."/>
            <person name="Desimone D.W."/>
        </authorList>
    </citation>
    <scope>NUCLEOTIDE SEQUENCE [MRNA] OF 318-393</scope>
</reference>
<name>ITA5_XENLA</name>
<dbReference type="EMBL" id="U12683">
    <property type="protein sequence ID" value="AAA99668.1"/>
    <property type="molecule type" value="mRNA"/>
</dbReference>
<dbReference type="EMBL" id="L10191">
    <property type="protein sequence ID" value="AAA16249.1"/>
    <property type="molecule type" value="mRNA"/>
</dbReference>
<dbReference type="PIR" id="I51527">
    <property type="entry name" value="I51527"/>
</dbReference>
<dbReference type="RefSeq" id="NP_001081072.1">
    <property type="nucleotide sequence ID" value="NM_001087603.1"/>
</dbReference>
<dbReference type="SMR" id="Q06274"/>
<dbReference type="GlyCosmos" id="Q06274">
    <property type="glycosylation" value="15 sites, No reported glycans"/>
</dbReference>
<dbReference type="GeneID" id="394366"/>
<dbReference type="KEGG" id="xla:394366"/>
<dbReference type="AGR" id="Xenbase:XB-GENE-866304"/>
<dbReference type="CTD" id="394366"/>
<dbReference type="Xenbase" id="XB-GENE-866304">
    <property type="gene designation" value="itga5.L"/>
</dbReference>
<dbReference type="OrthoDB" id="5317514at2759"/>
<dbReference type="Proteomes" id="UP000186698">
    <property type="component" value="Chromosome 2L"/>
</dbReference>
<dbReference type="Bgee" id="394366">
    <property type="expression patterns" value="Expressed in egg cell and 19 other cell types or tissues"/>
</dbReference>
<dbReference type="GO" id="GO:0009986">
    <property type="term" value="C:cell surface"/>
    <property type="evidence" value="ECO:0000250"/>
    <property type="project" value="UniProtKB"/>
</dbReference>
<dbReference type="GO" id="GO:0009897">
    <property type="term" value="C:external side of plasma membrane"/>
    <property type="evidence" value="ECO:0000318"/>
    <property type="project" value="GO_Central"/>
</dbReference>
<dbReference type="GO" id="GO:0005925">
    <property type="term" value="C:focal adhesion"/>
    <property type="evidence" value="ECO:0000250"/>
    <property type="project" value="UniProtKB"/>
</dbReference>
<dbReference type="GO" id="GO:0008305">
    <property type="term" value="C:integrin complex"/>
    <property type="evidence" value="ECO:0000318"/>
    <property type="project" value="GO_Central"/>
</dbReference>
<dbReference type="GO" id="GO:0005886">
    <property type="term" value="C:plasma membrane"/>
    <property type="evidence" value="ECO:0000250"/>
    <property type="project" value="UniProtKB"/>
</dbReference>
<dbReference type="GO" id="GO:0005178">
    <property type="term" value="F:integrin binding"/>
    <property type="evidence" value="ECO:0000318"/>
    <property type="project" value="GO_Central"/>
</dbReference>
<dbReference type="GO" id="GO:0046872">
    <property type="term" value="F:metal ion binding"/>
    <property type="evidence" value="ECO:0007669"/>
    <property type="project" value="UniProtKB-KW"/>
</dbReference>
<dbReference type="GO" id="GO:0001525">
    <property type="term" value="P:angiogenesis"/>
    <property type="evidence" value="ECO:0000318"/>
    <property type="project" value="GO_Central"/>
</dbReference>
<dbReference type="GO" id="GO:0033627">
    <property type="term" value="P:cell adhesion mediated by integrin"/>
    <property type="evidence" value="ECO:0000250"/>
    <property type="project" value="UniProtKB"/>
</dbReference>
<dbReference type="GO" id="GO:0098609">
    <property type="term" value="P:cell-cell adhesion"/>
    <property type="evidence" value="ECO:0000318"/>
    <property type="project" value="GO_Central"/>
</dbReference>
<dbReference type="GO" id="GO:0007160">
    <property type="term" value="P:cell-matrix adhesion"/>
    <property type="evidence" value="ECO:0007669"/>
    <property type="project" value="TreeGrafter"/>
</dbReference>
<dbReference type="GO" id="GO:0007229">
    <property type="term" value="P:integrin-mediated signaling pathway"/>
    <property type="evidence" value="ECO:0000318"/>
    <property type="project" value="GO_Central"/>
</dbReference>
<dbReference type="FunFam" id="2.130.10.130:FF:000003">
    <property type="entry name" value="Integrin alpha V"/>
    <property type="match status" value="1"/>
</dbReference>
<dbReference type="FunFam" id="2.60.40.1510:FF:000001">
    <property type="entry name" value="Integrin alpha V"/>
    <property type="match status" value="1"/>
</dbReference>
<dbReference type="FunFam" id="1.20.5.930:FF:000001">
    <property type="entry name" value="Integrin subunit alpha V"/>
    <property type="match status" value="1"/>
</dbReference>
<dbReference type="FunFam" id="2.60.40.1460:FF:000001">
    <property type="entry name" value="Integrin, alpha V"/>
    <property type="match status" value="1"/>
</dbReference>
<dbReference type="Gene3D" id="1.20.5.930">
    <property type="entry name" value="Bicelle-embedded integrin alpha(iib) transmembrane segment"/>
    <property type="match status" value="1"/>
</dbReference>
<dbReference type="Gene3D" id="2.130.10.130">
    <property type="entry name" value="Integrin alpha, N-terminal"/>
    <property type="match status" value="1"/>
</dbReference>
<dbReference type="Gene3D" id="2.60.40.1460">
    <property type="entry name" value="Integrin domains. Chain A, domain 2"/>
    <property type="match status" value="1"/>
</dbReference>
<dbReference type="Gene3D" id="2.60.40.1510">
    <property type="entry name" value="ntegrin, alpha v. Chain A, domain 3"/>
    <property type="match status" value="1"/>
</dbReference>
<dbReference type="Gene3D" id="2.60.40.1530">
    <property type="entry name" value="ntegrin, alpha v. Chain A, domain 4"/>
    <property type="match status" value="1"/>
</dbReference>
<dbReference type="InterPro" id="IPR013517">
    <property type="entry name" value="FG-GAP"/>
</dbReference>
<dbReference type="InterPro" id="IPR013519">
    <property type="entry name" value="Int_alpha_beta-p"/>
</dbReference>
<dbReference type="InterPro" id="IPR000413">
    <property type="entry name" value="Integrin_alpha"/>
</dbReference>
<dbReference type="InterPro" id="IPR018184">
    <property type="entry name" value="Integrin_alpha_C_CS"/>
</dbReference>
<dbReference type="InterPro" id="IPR013649">
    <property type="entry name" value="Integrin_alpha_Ig-like_1"/>
</dbReference>
<dbReference type="InterPro" id="IPR048285">
    <property type="entry name" value="Integrin_alpha_Ig-like_2"/>
</dbReference>
<dbReference type="InterPro" id="IPR048286">
    <property type="entry name" value="Integrin_alpha_Ig-like_3"/>
</dbReference>
<dbReference type="InterPro" id="IPR028994">
    <property type="entry name" value="Integrin_alpha_N"/>
</dbReference>
<dbReference type="InterPro" id="IPR032695">
    <property type="entry name" value="Integrin_dom_sf"/>
</dbReference>
<dbReference type="PANTHER" id="PTHR23220">
    <property type="entry name" value="INTEGRIN ALPHA"/>
    <property type="match status" value="1"/>
</dbReference>
<dbReference type="PANTHER" id="PTHR23220:SF3">
    <property type="entry name" value="INTEGRIN ALPHA-5"/>
    <property type="match status" value="1"/>
</dbReference>
<dbReference type="Pfam" id="PF01839">
    <property type="entry name" value="FG-GAP"/>
    <property type="match status" value="2"/>
</dbReference>
<dbReference type="Pfam" id="PF08441">
    <property type="entry name" value="Integrin_A_Ig_1"/>
    <property type="match status" value="1"/>
</dbReference>
<dbReference type="Pfam" id="PF20805">
    <property type="entry name" value="Integrin_A_Ig_2"/>
    <property type="match status" value="1"/>
</dbReference>
<dbReference type="Pfam" id="PF20806">
    <property type="entry name" value="Integrin_A_Ig_3"/>
    <property type="match status" value="1"/>
</dbReference>
<dbReference type="PRINTS" id="PR01185">
    <property type="entry name" value="INTEGRINA"/>
</dbReference>
<dbReference type="SMART" id="SM00191">
    <property type="entry name" value="Int_alpha"/>
    <property type="match status" value="5"/>
</dbReference>
<dbReference type="SUPFAM" id="SSF69318">
    <property type="entry name" value="Integrin alpha N-terminal domain"/>
    <property type="match status" value="1"/>
</dbReference>
<dbReference type="SUPFAM" id="SSF69179">
    <property type="entry name" value="Integrin domains"/>
    <property type="match status" value="3"/>
</dbReference>
<dbReference type="PROSITE" id="PS51470">
    <property type="entry name" value="FG_GAP"/>
    <property type="match status" value="7"/>
</dbReference>
<dbReference type="PROSITE" id="PS00242">
    <property type="entry name" value="INTEGRIN_ALPHA"/>
    <property type="match status" value="1"/>
</dbReference>
<protein>
    <recommendedName>
        <fullName>Integrin alpha-5</fullName>
    </recommendedName>
    <alternativeName>
        <fullName>Fibronectin receptor subunit alpha</fullName>
    </alternativeName>
    <alternativeName>
        <fullName>Integrin alpha-F</fullName>
    </alternativeName>
    <alternativeName>
        <fullName>VLA-5</fullName>
    </alternativeName>
    <component>
        <recommendedName>
            <fullName>Integrin alpha-5 heavy chain</fullName>
        </recommendedName>
    </component>
    <component>
        <recommendedName>
            <fullName>Integrin alpha-5 light chain</fullName>
        </recommendedName>
    </component>
</protein>
<evidence type="ECO:0000250" key="1">
    <source>
        <dbReference type="UniProtKB" id="P08648"/>
    </source>
</evidence>
<evidence type="ECO:0000255" key="2"/>
<evidence type="ECO:0000255" key="3">
    <source>
        <dbReference type="PROSITE-ProRule" id="PRU00803"/>
    </source>
</evidence>
<evidence type="ECO:0000305" key="4"/>
<keyword id="KW-0106">Calcium</keyword>
<keyword id="KW-0130">Cell adhesion</keyword>
<keyword id="KW-0965">Cell junction</keyword>
<keyword id="KW-1003">Cell membrane</keyword>
<keyword id="KW-0165">Cleavage on pair of basic residues</keyword>
<keyword id="KW-1015">Disulfide bond</keyword>
<keyword id="KW-0325">Glycoprotein</keyword>
<keyword id="KW-0401">Integrin</keyword>
<keyword id="KW-0472">Membrane</keyword>
<keyword id="KW-0479">Metal-binding</keyword>
<keyword id="KW-0675">Receptor</keyword>
<keyword id="KW-1185">Reference proteome</keyword>
<keyword id="KW-0677">Repeat</keyword>
<keyword id="KW-0732">Signal</keyword>
<keyword id="KW-0812">Transmembrane</keyword>
<keyword id="KW-1133">Transmembrane helix</keyword>
<accession>Q06274</accession>
<feature type="signal peptide" evidence="2">
    <location>
        <begin position="1"/>
        <end position="32"/>
    </location>
</feature>
<feature type="chain" id="PRO_0000016255" description="Integrin alpha-5">
    <location>
        <begin position="33"/>
        <end position="1050"/>
    </location>
</feature>
<feature type="chain" id="PRO_0000016256" description="Integrin alpha-5 heavy chain" evidence="2">
    <location>
        <begin position="33"/>
        <end position="932"/>
    </location>
</feature>
<feature type="chain" id="PRO_0000016257" description="Integrin alpha-5 light chain" evidence="2">
    <location>
        <begin position="933"/>
        <end position="1050"/>
    </location>
</feature>
<feature type="topological domain" description="Extracellular" evidence="2">
    <location>
        <begin position="33"/>
        <end position="996"/>
    </location>
</feature>
<feature type="transmembrane region" description="Helical" evidence="2">
    <location>
        <begin position="997"/>
        <end position="1022"/>
    </location>
</feature>
<feature type="topological domain" description="Cytoplasmic" evidence="2">
    <location>
        <begin position="1023"/>
        <end position="1050"/>
    </location>
</feature>
<feature type="repeat" description="FG-GAP 1" evidence="3">
    <location>
        <begin position="34"/>
        <end position="99"/>
    </location>
</feature>
<feature type="repeat" description="FG-GAP 2" evidence="3">
    <location>
        <begin position="116"/>
        <end position="175"/>
    </location>
</feature>
<feature type="repeat" description="FG-GAP 3" evidence="3">
    <location>
        <begin position="183"/>
        <end position="235"/>
    </location>
</feature>
<feature type="repeat" description="FG-GAP 4" evidence="3">
    <location>
        <begin position="249"/>
        <end position="301"/>
    </location>
</feature>
<feature type="repeat" description="FG-GAP 5" evidence="3">
    <location>
        <begin position="302"/>
        <end position="367"/>
    </location>
</feature>
<feature type="repeat" description="FG-GAP 6" evidence="3">
    <location>
        <begin position="368"/>
        <end position="426"/>
    </location>
</feature>
<feature type="repeat" description="FG-GAP 7" evidence="3">
    <location>
        <begin position="430"/>
        <end position="493"/>
    </location>
</feature>
<feature type="short sequence motif" description="GFFKR motif" evidence="4">
    <location>
        <begin position="1025"/>
        <end position="1029"/>
    </location>
</feature>
<feature type="binding site" evidence="1">
    <location>
        <position position="270"/>
    </location>
    <ligand>
        <name>Ca(2+)</name>
        <dbReference type="ChEBI" id="CHEBI:29108"/>
        <label>1</label>
    </ligand>
</feature>
<feature type="binding site" evidence="1">
    <location>
        <position position="272"/>
    </location>
    <ligand>
        <name>Ca(2+)</name>
        <dbReference type="ChEBI" id="CHEBI:29108"/>
        <label>1</label>
    </ligand>
</feature>
<feature type="binding site" evidence="1">
    <location>
        <position position="274"/>
    </location>
    <ligand>
        <name>Ca(2+)</name>
        <dbReference type="ChEBI" id="CHEBI:29108"/>
        <label>1</label>
    </ligand>
</feature>
<feature type="binding site" evidence="1">
    <location>
        <position position="276"/>
    </location>
    <ligand>
        <name>Ca(2+)</name>
        <dbReference type="ChEBI" id="CHEBI:29108"/>
        <label>1</label>
    </ligand>
</feature>
<feature type="binding site" evidence="1">
    <location>
        <position position="278"/>
    </location>
    <ligand>
        <name>Ca(2+)</name>
        <dbReference type="ChEBI" id="CHEBI:29108"/>
        <label>1</label>
    </ligand>
</feature>
<feature type="binding site" evidence="1">
    <location>
        <position position="324"/>
    </location>
    <ligand>
        <name>Ca(2+)</name>
        <dbReference type="ChEBI" id="CHEBI:29108"/>
        <label>2</label>
    </ligand>
</feature>
<feature type="binding site" evidence="1">
    <location>
        <position position="326"/>
    </location>
    <ligand>
        <name>Ca(2+)</name>
        <dbReference type="ChEBI" id="CHEBI:29108"/>
        <label>2</label>
    </ligand>
</feature>
<feature type="binding site" evidence="1">
    <location>
        <position position="328"/>
    </location>
    <ligand>
        <name>Ca(2+)</name>
        <dbReference type="ChEBI" id="CHEBI:29108"/>
        <label>2</label>
    </ligand>
</feature>
<feature type="binding site" evidence="1">
    <location>
        <position position="330"/>
    </location>
    <ligand>
        <name>Ca(2+)</name>
        <dbReference type="ChEBI" id="CHEBI:29108"/>
        <label>2</label>
    </ligand>
</feature>
<feature type="binding site" evidence="1">
    <location>
        <position position="332"/>
    </location>
    <ligand>
        <name>Ca(2+)</name>
        <dbReference type="ChEBI" id="CHEBI:29108"/>
        <label>2</label>
    </ligand>
</feature>
<feature type="binding site" evidence="1">
    <location>
        <position position="390"/>
    </location>
    <ligand>
        <name>Ca(2+)</name>
        <dbReference type="ChEBI" id="CHEBI:29108"/>
        <label>3</label>
    </ligand>
</feature>
<feature type="binding site" evidence="1">
    <location>
        <position position="392"/>
    </location>
    <ligand>
        <name>Ca(2+)</name>
        <dbReference type="ChEBI" id="CHEBI:29108"/>
        <label>3</label>
    </ligand>
</feature>
<feature type="binding site" evidence="1">
    <location>
        <position position="394"/>
    </location>
    <ligand>
        <name>Ca(2+)</name>
        <dbReference type="ChEBI" id="CHEBI:29108"/>
        <label>3</label>
    </ligand>
</feature>
<feature type="binding site" evidence="1">
    <location>
        <position position="398"/>
    </location>
    <ligand>
        <name>Ca(2+)</name>
        <dbReference type="ChEBI" id="CHEBI:29108"/>
        <label>3</label>
    </ligand>
</feature>
<feature type="binding site" evidence="1">
    <location>
        <position position="454"/>
    </location>
    <ligand>
        <name>Ca(2+)</name>
        <dbReference type="ChEBI" id="CHEBI:29108"/>
        <label>4</label>
    </ligand>
</feature>
<feature type="binding site" evidence="1">
    <location>
        <position position="456"/>
    </location>
    <ligand>
        <name>Ca(2+)</name>
        <dbReference type="ChEBI" id="CHEBI:29108"/>
        <label>4</label>
    </ligand>
</feature>
<feature type="binding site" evidence="1">
    <location>
        <position position="458"/>
    </location>
    <ligand>
        <name>Ca(2+)</name>
        <dbReference type="ChEBI" id="CHEBI:29108"/>
        <label>4</label>
    </ligand>
</feature>
<feature type="binding site" evidence="1">
    <location>
        <position position="460"/>
    </location>
    <ligand>
        <name>Ca(2+)</name>
        <dbReference type="ChEBI" id="CHEBI:29108"/>
        <label>4</label>
    </ligand>
</feature>
<feature type="binding site" evidence="1">
    <location>
        <position position="462"/>
    </location>
    <ligand>
        <name>Ca(2+)</name>
        <dbReference type="ChEBI" id="CHEBI:29108"/>
        <label>4</label>
    </ligand>
</feature>
<feature type="glycosylation site" description="N-linked (GlcNAc...) asparagine" evidence="2">
    <location>
        <position position="75"/>
    </location>
</feature>
<feature type="glycosylation site" description="N-linked (GlcNAc...) asparagine" evidence="2">
    <location>
        <position position="95"/>
    </location>
</feature>
<feature type="glycosylation site" description="N-linked (GlcNAc...) asparagine" evidence="2">
    <location>
        <position position="98"/>
    </location>
</feature>
<feature type="glycosylation site" description="N-linked (GlcNAc...) asparagine" evidence="2">
    <location>
        <position position="172"/>
    </location>
</feature>
<feature type="glycosylation site" description="N-linked (GlcNAc...) asparagine" evidence="2">
    <location>
        <position position="287"/>
    </location>
</feature>
<feature type="glycosylation site" description="N-linked (GlcNAc...) asparagine" evidence="2">
    <location>
        <position position="297"/>
    </location>
</feature>
<feature type="glycosylation site" description="N-linked (GlcNAc...) asparagine" evidence="2">
    <location>
        <position position="306"/>
    </location>
</feature>
<feature type="glycosylation site" description="N-linked (GlcNAc...) asparagine" evidence="2">
    <location>
        <position position="507"/>
    </location>
</feature>
<feature type="glycosylation site" description="N-linked (GlcNAc...) asparagine" evidence="2">
    <location>
        <position position="515"/>
    </location>
</feature>
<feature type="glycosylation site" description="N-linked (GlcNAc...) asparagine" evidence="2">
    <location>
        <position position="521"/>
    </location>
</feature>
<feature type="glycosylation site" description="N-linked (GlcNAc...) asparagine" evidence="2">
    <location>
        <position position="600"/>
    </location>
</feature>
<feature type="glycosylation site" description="N-linked (GlcNAc...) asparagine" evidence="2">
    <location>
        <position position="649"/>
    </location>
</feature>
<feature type="glycosylation site" description="N-linked (GlcNAc...) asparagine" evidence="2">
    <location>
        <position position="714"/>
    </location>
</feature>
<feature type="glycosylation site" description="N-linked (GlcNAc...) asparagine" evidence="2">
    <location>
        <position position="763"/>
    </location>
</feature>
<feature type="glycosylation site" description="N-linked (GlcNAc...) asparagine" evidence="2">
    <location>
        <position position="861"/>
    </location>
</feature>
<feature type="disulfide bond" evidence="1">
    <location>
        <begin position="90"/>
        <end position="99"/>
    </location>
</feature>
<feature type="disulfide bond" evidence="1">
    <location>
        <begin position="145"/>
        <end position="166"/>
    </location>
</feature>
<feature type="disulfide bond" evidence="1">
    <location>
        <begin position="182"/>
        <end position="195"/>
    </location>
</feature>
<feature type="disulfide bond" evidence="1">
    <location>
        <begin position="502"/>
        <end position="513"/>
    </location>
</feature>
<feature type="disulfide bond" evidence="1">
    <location>
        <begin position="519"/>
        <end position="575"/>
    </location>
</feature>
<feature type="disulfide bond" evidence="1">
    <location>
        <begin position="636"/>
        <end position="642"/>
    </location>
</feature>
<feature type="disulfide bond" evidence="1">
    <location>
        <begin position="708"/>
        <end position="721"/>
    </location>
</feature>
<feature type="disulfide bond" evidence="1">
    <location>
        <begin position="839"/>
        <end position="958"/>
    </location>
</feature>
<feature type="disulfide bond" description="Interchain (between heavy and light chains)" evidence="1">
    <location>
        <begin position="862"/>
        <end position="922"/>
    </location>
</feature>
<feature type="disulfide bond" evidence="1">
    <location>
        <begin position="910"/>
        <end position="917"/>
    </location>
</feature>
<organism>
    <name type="scientific">Xenopus laevis</name>
    <name type="common">African clawed frog</name>
    <dbReference type="NCBI Taxonomy" id="8355"/>
    <lineage>
        <taxon>Eukaryota</taxon>
        <taxon>Metazoa</taxon>
        <taxon>Chordata</taxon>
        <taxon>Craniata</taxon>
        <taxon>Vertebrata</taxon>
        <taxon>Euteleostomi</taxon>
        <taxon>Amphibia</taxon>
        <taxon>Batrachia</taxon>
        <taxon>Anura</taxon>
        <taxon>Pipoidea</taxon>
        <taxon>Pipidae</taxon>
        <taxon>Xenopodinae</taxon>
        <taxon>Xenopus</taxon>
        <taxon>Xenopus</taxon>
    </lineage>
</organism>
<proteinExistence type="evidence at transcript level"/>